<evidence type="ECO:0000250" key="1">
    <source>
        <dbReference type="UniProtKB" id="A6NMB9"/>
    </source>
</evidence>
<evidence type="ECO:0000250" key="2">
    <source>
        <dbReference type="UniProtKB" id="J3QK54"/>
    </source>
</evidence>
<evidence type="ECO:0000250" key="3">
    <source>
        <dbReference type="UniProtKB" id="O16299"/>
    </source>
</evidence>
<evidence type="ECO:0000250" key="4">
    <source>
        <dbReference type="UniProtKB" id="Q6PIW4"/>
    </source>
</evidence>
<evidence type="ECO:0000256" key="5">
    <source>
        <dbReference type="SAM" id="MobiDB-lite"/>
    </source>
</evidence>
<evidence type="ECO:0000269" key="6">
    <source>
    </source>
</evidence>
<evidence type="ECO:0000305" key="7"/>
<dbReference type="EC" id="3.6.4.-"/>
<dbReference type="EMBL" id="CR354433">
    <property type="status" value="NOT_ANNOTATED_CDS"/>
    <property type="molecule type" value="Genomic_DNA"/>
</dbReference>
<dbReference type="EMBL" id="CT573351">
    <property type="status" value="NOT_ANNOTATED_CDS"/>
    <property type="molecule type" value="Genomic_DNA"/>
</dbReference>
<dbReference type="RefSeq" id="NP_001201837.1">
    <property type="nucleotide sequence ID" value="NM_001214908.1"/>
</dbReference>
<dbReference type="RefSeq" id="XP_068072876.1">
    <property type="nucleotide sequence ID" value="XM_068216775.1"/>
</dbReference>
<dbReference type="RefSeq" id="XP_068072877.1">
    <property type="nucleotide sequence ID" value="XM_068216776.1"/>
</dbReference>
<dbReference type="SMR" id="E9QEA3"/>
<dbReference type="STRING" id="7955.ENSDARP00000114769"/>
<dbReference type="PaxDb" id="7955-ENSDARP00000114769"/>
<dbReference type="PeptideAtlas" id="E9QEA3"/>
<dbReference type="Ensembl" id="ENSDART00000134418">
    <property type="protein sequence ID" value="ENSDARP00000114769"/>
    <property type="gene ID" value="ENSDARG00000057062"/>
</dbReference>
<dbReference type="GeneID" id="561837"/>
<dbReference type="KEGG" id="dre:561837"/>
<dbReference type="AGR" id="ZFIN:ZDB-GENE-090313-189"/>
<dbReference type="CTD" id="401720"/>
<dbReference type="ZFIN" id="ZDB-GENE-090313-189">
    <property type="gene designation" value="fignl2"/>
</dbReference>
<dbReference type="eggNOG" id="KOG0740">
    <property type="taxonomic scope" value="Eukaryota"/>
</dbReference>
<dbReference type="HOGENOM" id="CLU_000688_21_10_1"/>
<dbReference type="OMA" id="CPQPNAA"/>
<dbReference type="OrthoDB" id="8803010at2759"/>
<dbReference type="PhylomeDB" id="E9QEA3"/>
<dbReference type="TreeFam" id="TF105015"/>
<dbReference type="Proteomes" id="UP000000437">
    <property type="component" value="Alternate scaffold 23"/>
</dbReference>
<dbReference type="Proteomes" id="UP000000437">
    <property type="component" value="Chromosome 23"/>
</dbReference>
<dbReference type="Bgee" id="ENSDARG00000057062">
    <property type="expression patterns" value="Expressed in mature ovarian follicle and 18 other cell types or tissues"/>
</dbReference>
<dbReference type="ExpressionAtlas" id="E9QEA3">
    <property type="expression patterns" value="baseline"/>
</dbReference>
<dbReference type="GO" id="GO:0005938">
    <property type="term" value="C:cell cortex"/>
    <property type="evidence" value="ECO:0007669"/>
    <property type="project" value="UniProtKB-SubCell"/>
</dbReference>
<dbReference type="GO" id="GO:0005524">
    <property type="term" value="F:ATP binding"/>
    <property type="evidence" value="ECO:0007669"/>
    <property type="project" value="UniProtKB-KW"/>
</dbReference>
<dbReference type="GO" id="GO:0016887">
    <property type="term" value="F:ATP hydrolysis activity"/>
    <property type="evidence" value="ECO:0000318"/>
    <property type="project" value="GO_Central"/>
</dbReference>
<dbReference type="GO" id="GO:0008568">
    <property type="term" value="F:microtubule severing ATPase activity"/>
    <property type="evidence" value="ECO:0000318"/>
    <property type="project" value="GO_Central"/>
</dbReference>
<dbReference type="GO" id="GO:0051013">
    <property type="term" value="P:microtubule severing"/>
    <property type="evidence" value="ECO:0000250"/>
    <property type="project" value="UniProtKB"/>
</dbReference>
<dbReference type="GO" id="GO:0001763">
    <property type="term" value="P:morphogenesis of a branching structure"/>
    <property type="evidence" value="ECO:0000315"/>
    <property type="project" value="UniProtKB"/>
</dbReference>
<dbReference type="GO" id="GO:0048681">
    <property type="term" value="P:negative regulation of axon regeneration"/>
    <property type="evidence" value="ECO:0000250"/>
    <property type="project" value="UniProtKB"/>
</dbReference>
<dbReference type="GO" id="GO:0030336">
    <property type="term" value="P:negative regulation of cell migration"/>
    <property type="evidence" value="ECO:0000250"/>
    <property type="project" value="UniProtKB"/>
</dbReference>
<dbReference type="Gene3D" id="1.10.8.60">
    <property type="match status" value="1"/>
</dbReference>
<dbReference type="Gene3D" id="3.40.50.300">
    <property type="entry name" value="P-loop containing nucleotide triphosphate hydrolases"/>
    <property type="match status" value="1"/>
</dbReference>
<dbReference type="InterPro" id="IPR003593">
    <property type="entry name" value="AAA+_ATPase"/>
</dbReference>
<dbReference type="InterPro" id="IPR003959">
    <property type="entry name" value="ATPase_AAA_core"/>
</dbReference>
<dbReference type="InterPro" id="IPR050304">
    <property type="entry name" value="MT-severing_AAA_ATPase"/>
</dbReference>
<dbReference type="InterPro" id="IPR027417">
    <property type="entry name" value="P-loop_NTPase"/>
</dbReference>
<dbReference type="PANTHER" id="PTHR23074">
    <property type="entry name" value="AAA DOMAIN-CONTAINING"/>
    <property type="match status" value="1"/>
</dbReference>
<dbReference type="PANTHER" id="PTHR23074:SF33">
    <property type="entry name" value="FIDGETIN-LIKE PROTEIN 2"/>
    <property type="match status" value="1"/>
</dbReference>
<dbReference type="Pfam" id="PF00004">
    <property type="entry name" value="AAA"/>
    <property type="match status" value="1"/>
</dbReference>
<dbReference type="SMART" id="SM00382">
    <property type="entry name" value="AAA"/>
    <property type="match status" value="1"/>
</dbReference>
<dbReference type="SUPFAM" id="SSF52540">
    <property type="entry name" value="P-loop containing nucleoside triphosphate hydrolases"/>
    <property type="match status" value="1"/>
</dbReference>
<comment type="function">
    <text evidence="1 2 6">Microtubule-severing enzyme that negatively regulates cell migration and wound healing. In migrating cells, targets dynamic microtubules (MTs) at the leading edge and severs them, thereby suppressing motility (By similarity). Negative regulator of axon regeneration that suppresses axonal growth by selectively severing dynamic MTs in the distal axon shaft and growth cone (By similarity). Contributes to proper cell branching during endothelial and neuronal development (PubMed:33585441).</text>
</comment>
<comment type="catalytic activity">
    <reaction evidence="3">
        <text>ATP + H2O = ADP + phosphate + H(+)</text>
        <dbReference type="Rhea" id="RHEA:13065"/>
        <dbReference type="ChEBI" id="CHEBI:15377"/>
        <dbReference type="ChEBI" id="CHEBI:15378"/>
        <dbReference type="ChEBI" id="CHEBI:30616"/>
        <dbReference type="ChEBI" id="CHEBI:43474"/>
        <dbReference type="ChEBI" id="CHEBI:456216"/>
    </reaction>
</comment>
<comment type="cofactor">
    <cofactor evidence="3">
        <name>Mg(2+)</name>
        <dbReference type="ChEBI" id="CHEBI:18420"/>
    </cofactor>
</comment>
<comment type="subcellular location">
    <subcellularLocation>
        <location evidence="1">Cytoplasm</location>
        <location evidence="1">Cell cortex</location>
    </subcellularLocation>
    <text evidence="1">Localizes at the leading edge of migrating cells.</text>
</comment>
<comment type="tissue specificity">
    <text evidence="6">Highly expressed in vascular endothelial cells and neuronal cells.</text>
</comment>
<comment type="developmental stage">
    <text evidence="6">At 24 hours post-fertilization (hpf), expressed in the midbrain-hindbrain boundary, hindbrain and somites as well as in the eyes and pectoral fins. At 48 hpf, expressed in the hindbrain, pharyngeal arch and pronephros and at 72 hpf, expressed in the pronephros and pectoral fins.</text>
</comment>
<comment type="disruption phenotype">
    <text evidence="6">Morpholino knockdown results in embryos with pericardial edema, reduced heart rate, smaller eyes and response to the light-darkness shift with a lower swimming velocity (PubMed:33585441). Morphants also show longer axonal length and more branches of caudal primary neurons (PubMed:33585441).</text>
</comment>
<comment type="similarity">
    <text evidence="7">Belongs to the AAA ATPase family.</text>
</comment>
<gene>
    <name type="primary">fignl2</name>
    <name type="ORF">si:dkey-157g16.6</name>
    <name type="ORF">wu:fc13c02</name>
</gene>
<feature type="chain" id="PRO_0000460146" description="Fidgetin-like protein 2">
    <location>
        <begin position="1"/>
        <end position="684"/>
    </location>
</feature>
<feature type="region of interest" description="Disordered" evidence="5">
    <location>
        <begin position="27"/>
        <end position="48"/>
    </location>
</feature>
<feature type="region of interest" description="Disordered" evidence="5">
    <location>
        <begin position="99"/>
        <end position="179"/>
    </location>
</feature>
<feature type="region of interest" description="Disordered" evidence="5">
    <location>
        <begin position="292"/>
        <end position="403"/>
    </location>
</feature>
<feature type="compositionally biased region" description="Polar residues" evidence="5">
    <location>
        <begin position="27"/>
        <end position="41"/>
    </location>
</feature>
<feature type="compositionally biased region" description="Low complexity" evidence="5">
    <location>
        <begin position="160"/>
        <end position="179"/>
    </location>
</feature>
<feature type="binding site" evidence="4">
    <location>
        <position position="431"/>
    </location>
    <ligand>
        <name>ATP</name>
        <dbReference type="ChEBI" id="CHEBI:30616"/>
    </ligand>
</feature>
<reference key="1">
    <citation type="journal article" date="2013" name="Nature">
        <title>The zebrafish reference genome sequence and its relationship to the human genome.</title>
        <authorList>
            <person name="Howe K."/>
            <person name="Clark M.D."/>
            <person name="Torroja C.F."/>
            <person name="Torrance J."/>
            <person name="Berthelot C."/>
            <person name="Muffato M."/>
            <person name="Collins J.E."/>
            <person name="Humphray S."/>
            <person name="McLaren K."/>
            <person name="Matthews L."/>
            <person name="McLaren S."/>
            <person name="Sealy I."/>
            <person name="Caccamo M."/>
            <person name="Churcher C."/>
            <person name="Scott C."/>
            <person name="Barrett J.C."/>
            <person name="Koch R."/>
            <person name="Rauch G.J."/>
            <person name="White S."/>
            <person name="Chow W."/>
            <person name="Kilian B."/>
            <person name="Quintais L.T."/>
            <person name="Guerra-Assuncao J.A."/>
            <person name="Zhou Y."/>
            <person name="Gu Y."/>
            <person name="Yen J."/>
            <person name="Vogel J.H."/>
            <person name="Eyre T."/>
            <person name="Redmond S."/>
            <person name="Banerjee R."/>
            <person name="Chi J."/>
            <person name="Fu B."/>
            <person name="Langley E."/>
            <person name="Maguire S.F."/>
            <person name="Laird G.K."/>
            <person name="Lloyd D."/>
            <person name="Kenyon E."/>
            <person name="Donaldson S."/>
            <person name="Sehra H."/>
            <person name="Almeida-King J."/>
            <person name="Loveland J."/>
            <person name="Trevanion S."/>
            <person name="Jones M."/>
            <person name="Quail M."/>
            <person name="Willey D."/>
            <person name="Hunt A."/>
            <person name="Burton J."/>
            <person name="Sims S."/>
            <person name="McLay K."/>
            <person name="Plumb B."/>
            <person name="Davis J."/>
            <person name="Clee C."/>
            <person name="Oliver K."/>
            <person name="Clark R."/>
            <person name="Riddle C."/>
            <person name="Elliot D."/>
            <person name="Threadgold G."/>
            <person name="Harden G."/>
            <person name="Ware D."/>
            <person name="Begum S."/>
            <person name="Mortimore B."/>
            <person name="Kerry G."/>
            <person name="Heath P."/>
            <person name="Phillimore B."/>
            <person name="Tracey A."/>
            <person name="Corby N."/>
            <person name="Dunn M."/>
            <person name="Johnson C."/>
            <person name="Wood J."/>
            <person name="Clark S."/>
            <person name="Pelan S."/>
            <person name="Griffiths G."/>
            <person name="Smith M."/>
            <person name="Glithero R."/>
            <person name="Howden P."/>
            <person name="Barker N."/>
            <person name="Lloyd C."/>
            <person name="Stevens C."/>
            <person name="Harley J."/>
            <person name="Holt K."/>
            <person name="Panagiotidis G."/>
            <person name="Lovell J."/>
            <person name="Beasley H."/>
            <person name="Henderson C."/>
            <person name="Gordon D."/>
            <person name="Auger K."/>
            <person name="Wright D."/>
            <person name="Collins J."/>
            <person name="Raisen C."/>
            <person name="Dyer L."/>
            <person name="Leung K."/>
            <person name="Robertson L."/>
            <person name="Ambridge K."/>
            <person name="Leongamornlert D."/>
            <person name="McGuire S."/>
            <person name="Gilderthorp R."/>
            <person name="Griffiths C."/>
            <person name="Manthravadi D."/>
            <person name="Nichol S."/>
            <person name="Barker G."/>
            <person name="Whitehead S."/>
            <person name="Kay M."/>
            <person name="Brown J."/>
            <person name="Murnane C."/>
            <person name="Gray E."/>
            <person name="Humphries M."/>
            <person name="Sycamore N."/>
            <person name="Barker D."/>
            <person name="Saunders D."/>
            <person name="Wallis J."/>
            <person name="Babbage A."/>
            <person name="Hammond S."/>
            <person name="Mashreghi-Mohammadi M."/>
            <person name="Barr L."/>
            <person name="Martin S."/>
            <person name="Wray P."/>
            <person name="Ellington A."/>
            <person name="Matthews N."/>
            <person name="Ellwood M."/>
            <person name="Woodmansey R."/>
            <person name="Clark G."/>
            <person name="Cooper J."/>
            <person name="Tromans A."/>
            <person name="Grafham D."/>
            <person name="Skuce C."/>
            <person name="Pandian R."/>
            <person name="Andrews R."/>
            <person name="Harrison E."/>
            <person name="Kimberley A."/>
            <person name="Garnett J."/>
            <person name="Fosker N."/>
            <person name="Hall R."/>
            <person name="Garner P."/>
            <person name="Kelly D."/>
            <person name="Bird C."/>
            <person name="Palmer S."/>
            <person name="Gehring I."/>
            <person name="Berger A."/>
            <person name="Dooley C.M."/>
            <person name="Ersan-Urun Z."/>
            <person name="Eser C."/>
            <person name="Geiger H."/>
            <person name="Geisler M."/>
            <person name="Karotki L."/>
            <person name="Kirn A."/>
            <person name="Konantz J."/>
            <person name="Konantz M."/>
            <person name="Oberlander M."/>
            <person name="Rudolph-Geiger S."/>
            <person name="Teucke M."/>
            <person name="Lanz C."/>
            <person name="Raddatz G."/>
            <person name="Osoegawa K."/>
            <person name="Zhu B."/>
            <person name="Rapp A."/>
            <person name="Widaa S."/>
            <person name="Langford C."/>
            <person name="Yang F."/>
            <person name="Schuster S.C."/>
            <person name="Carter N.P."/>
            <person name="Harrow J."/>
            <person name="Ning Z."/>
            <person name="Herrero J."/>
            <person name="Searle S.M."/>
            <person name="Enright A."/>
            <person name="Geisler R."/>
            <person name="Plasterk R.H."/>
            <person name="Lee C."/>
            <person name="Westerfield M."/>
            <person name="de Jong P.J."/>
            <person name="Zon L.I."/>
            <person name="Postlethwait J.H."/>
            <person name="Nusslein-Volhard C."/>
            <person name="Hubbard T.J."/>
            <person name="Roest Crollius H."/>
            <person name="Rogers J."/>
            <person name="Stemple D.L."/>
        </authorList>
    </citation>
    <scope>NUCLEOTIDE SEQUENCE [LARGE SCALE GENOMIC DNA]</scope>
    <source>
        <strain>Tuebingen</strain>
    </source>
</reference>
<reference key="2">
    <citation type="journal article" date="2020" name="Front. Cell Dev. Biol.">
        <title>Microtubule Severing Protein Fignl2 Contributes to Endothelial and Neuronal Branching in Zebrafish Development.</title>
        <authorList>
            <person name="Dong Z."/>
            <person name="Chen X."/>
            <person name="Li Y."/>
            <person name="Zhuo R."/>
            <person name="Lai X."/>
            <person name="Liu M."/>
        </authorList>
    </citation>
    <scope>FUNCTION</scope>
    <scope>DISRUPTION PHENOTYPE</scope>
    <scope>TISSUE SPECIFICITY</scope>
    <scope>DEVELOPMENTAL STAGE</scope>
</reference>
<reference key="3">
    <citation type="journal article" date="2021" name="Comp. Biochem. Physiol.">
        <title>A comparative study of the expression patterns of Fign family members in zebrafish embryonic development.</title>
        <authorList>
            <person name="Dong Z."/>
            <person name="Li Y."/>
            <person name="Chen X."/>
            <person name="Lai X."/>
            <person name="Liu M."/>
        </authorList>
    </citation>
    <scope>DEVELOPMENTAL STAGE</scope>
</reference>
<proteinExistence type="evidence at transcript level"/>
<protein>
    <recommendedName>
        <fullName>Fidgetin-like protein 2</fullName>
        <ecNumber>3.6.4.-</ecNumber>
    </recommendedName>
</protein>
<name>FIGL2_DANRE</name>
<accession>E9QEA3</accession>
<accession>A0A8M1NZ11</accession>
<keyword id="KW-0067">ATP-binding</keyword>
<keyword id="KW-0963">Cytoplasm</keyword>
<keyword id="KW-0378">Hydrolase</keyword>
<keyword id="KW-0547">Nucleotide-binding</keyword>
<keyword id="KW-1185">Reference proteome</keyword>
<sequence length="684" mass="73514">MLSPIVPYSLLKMHWNPEHAQPLSQWPEQHLDVSSTTSSPAHKSELYSSRGRGSYSYAWANDDISALTASNLLKRYAEKYSGMLDSPYERPSVGAYPEPGAFGGLNGGQKSELEPWPLTHSTDGAYSLVPPSSHESLSGPKVVPTSAGPPGSGNVSAVNSNLSDSGYSGSSSCSGPHSSEYPPSYNGTYLSSGYCPQPSSALPPASLHALQPNPTLLPSYTTTAPVYNYPPSTYPHQTGLAPSYTHPTAPYIPSPLPSRPTVVGGSYGYQNSSVGGSEPGGSLKRKAFEMTLDEEDSDSSRYRKYSYDPMKTGGDSPYGVTDKAGNGFGTGSTDPQGFKPSKPSSQSSLEGDEVGKYSGLKPLVSPTYGAAGDYSPPAAMTGENGGAEQGFSQNRSQKRSDPMKSIEPRMLELVSRELQDCSPAMLWTELAGNCHIKAALEEDLLWPVLRPNPAIHPPKTILLFGPQGGGKTTLARSLSSQIGASFYRLSCATLASKLKGEAEQLLLTLFSVATARQPAMVLLSEVEAIEEEGLRQQLQAQLEKIQHNQSNQFLVVCTTRRPDLIKDSLLRCFSKRYHIGLPDGNTRRHVLLQALAPQGCSLSERELSAVLQRSEGFSVWELLQLCQQALASASASASVPLHSLPASLSSPTLQDFENAFCKVRPHSTPKELDTCMEWSKVYSH</sequence>
<organism>
    <name type="scientific">Danio rerio</name>
    <name type="common">Zebrafish</name>
    <name type="synonym">Brachydanio rerio</name>
    <dbReference type="NCBI Taxonomy" id="7955"/>
    <lineage>
        <taxon>Eukaryota</taxon>
        <taxon>Metazoa</taxon>
        <taxon>Chordata</taxon>
        <taxon>Craniata</taxon>
        <taxon>Vertebrata</taxon>
        <taxon>Euteleostomi</taxon>
        <taxon>Actinopterygii</taxon>
        <taxon>Neopterygii</taxon>
        <taxon>Teleostei</taxon>
        <taxon>Ostariophysi</taxon>
        <taxon>Cypriniformes</taxon>
        <taxon>Danionidae</taxon>
        <taxon>Danioninae</taxon>
        <taxon>Danio</taxon>
    </lineage>
</organism>